<protein>
    <recommendedName>
        <fullName evidence="1">LexA repressor</fullName>
        <ecNumber evidence="1">3.4.21.88</ecNumber>
    </recommendedName>
</protein>
<sequence>MATKLTERQQEILDLIRQTVARTGFPPTRAEIAQALGFRSPNAAEDHLKALARKGAIELTAGASRGIRLKVPDSATPSAQLTHPLLAQLVLPLVGRVAAGSPILASEHVEREVGVDPGLFAQTPDYLLKVRGMSMRDAGILEGDLLAVKRAAEARNGQIVVARLGDEVTVKRLQRQNGRIELLPENPDFAPIVVANTDEFALEGIAVGLIRTQPLH</sequence>
<name>LEXA_BORPE</name>
<organism>
    <name type="scientific">Bordetella pertussis (strain Tohama I / ATCC BAA-589 / NCTC 13251)</name>
    <dbReference type="NCBI Taxonomy" id="257313"/>
    <lineage>
        <taxon>Bacteria</taxon>
        <taxon>Pseudomonadati</taxon>
        <taxon>Pseudomonadota</taxon>
        <taxon>Betaproteobacteria</taxon>
        <taxon>Burkholderiales</taxon>
        <taxon>Alcaligenaceae</taxon>
        <taxon>Bordetella</taxon>
    </lineage>
</organism>
<evidence type="ECO:0000255" key="1">
    <source>
        <dbReference type="HAMAP-Rule" id="MF_00015"/>
    </source>
</evidence>
<comment type="function">
    <text evidence="1">Represses a number of genes involved in the response to DNA damage (SOS response), including recA and lexA. In the presence of single-stranded DNA, RecA interacts with LexA causing an autocatalytic cleavage which disrupts the DNA-binding part of LexA, leading to derepression of the SOS regulon and eventually DNA repair.</text>
</comment>
<comment type="catalytic activity">
    <reaction evidence="1">
        <text>Hydrolysis of Ala-|-Gly bond in repressor LexA.</text>
        <dbReference type="EC" id="3.4.21.88"/>
    </reaction>
</comment>
<comment type="subunit">
    <text evidence="1">Homodimer.</text>
</comment>
<comment type="similarity">
    <text evidence="1">Belongs to the peptidase S24 family.</text>
</comment>
<reference key="1">
    <citation type="journal article" date="2003" name="Nat. Genet.">
        <title>Comparative analysis of the genome sequences of Bordetella pertussis, Bordetella parapertussis and Bordetella bronchiseptica.</title>
        <authorList>
            <person name="Parkhill J."/>
            <person name="Sebaihia M."/>
            <person name="Preston A."/>
            <person name="Murphy L.D."/>
            <person name="Thomson N.R."/>
            <person name="Harris D.E."/>
            <person name="Holden M.T.G."/>
            <person name="Churcher C.M."/>
            <person name="Bentley S.D."/>
            <person name="Mungall K.L."/>
            <person name="Cerdeno-Tarraga A.-M."/>
            <person name="Temple L."/>
            <person name="James K.D."/>
            <person name="Harris B."/>
            <person name="Quail M.A."/>
            <person name="Achtman M."/>
            <person name="Atkin R."/>
            <person name="Baker S."/>
            <person name="Basham D."/>
            <person name="Bason N."/>
            <person name="Cherevach I."/>
            <person name="Chillingworth T."/>
            <person name="Collins M."/>
            <person name="Cronin A."/>
            <person name="Davis P."/>
            <person name="Doggett J."/>
            <person name="Feltwell T."/>
            <person name="Goble A."/>
            <person name="Hamlin N."/>
            <person name="Hauser H."/>
            <person name="Holroyd S."/>
            <person name="Jagels K."/>
            <person name="Leather S."/>
            <person name="Moule S."/>
            <person name="Norberczak H."/>
            <person name="O'Neil S."/>
            <person name="Ormond D."/>
            <person name="Price C."/>
            <person name="Rabbinowitsch E."/>
            <person name="Rutter S."/>
            <person name="Sanders M."/>
            <person name="Saunders D."/>
            <person name="Seeger K."/>
            <person name="Sharp S."/>
            <person name="Simmonds M."/>
            <person name="Skelton J."/>
            <person name="Squares R."/>
            <person name="Squares S."/>
            <person name="Stevens K."/>
            <person name="Unwin L."/>
            <person name="Whitehead S."/>
            <person name="Barrell B.G."/>
            <person name="Maskell D.J."/>
        </authorList>
    </citation>
    <scope>NUCLEOTIDE SEQUENCE [LARGE SCALE GENOMIC DNA]</scope>
    <source>
        <strain>Tohama I / ATCC BAA-589 / NCTC 13251</strain>
    </source>
</reference>
<gene>
    <name evidence="1" type="primary">lexA</name>
    <name type="ordered locus">BP1794</name>
</gene>
<accession>Q7VRY0</accession>
<feature type="chain" id="PRO_0000170016" description="LexA repressor">
    <location>
        <begin position="1"/>
        <end position="216"/>
    </location>
</feature>
<feature type="DNA-binding region" description="H-T-H motif" evidence="1">
    <location>
        <begin position="29"/>
        <end position="49"/>
    </location>
</feature>
<feature type="active site" description="For autocatalytic cleavage activity" evidence="1">
    <location>
        <position position="134"/>
    </location>
</feature>
<feature type="active site" description="For autocatalytic cleavage activity" evidence="1">
    <location>
        <position position="171"/>
    </location>
</feature>
<feature type="site" description="Cleavage; by autolysis" evidence="1">
    <location>
        <begin position="99"/>
        <end position="100"/>
    </location>
</feature>
<dbReference type="EC" id="3.4.21.88" evidence="1"/>
<dbReference type="EMBL" id="BX640416">
    <property type="protein sequence ID" value="CAE42080.1"/>
    <property type="molecule type" value="Genomic_DNA"/>
</dbReference>
<dbReference type="RefSeq" id="NP_880500.1">
    <property type="nucleotide sequence ID" value="NC_002929.2"/>
</dbReference>
<dbReference type="RefSeq" id="WP_010930566.1">
    <property type="nucleotide sequence ID" value="NZ_CP039022.1"/>
</dbReference>
<dbReference type="SMR" id="Q7VRY0"/>
<dbReference type="STRING" id="257313.BP1794"/>
<dbReference type="MEROPS" id="S24.001"/>
<dbReference type="PaxDb" id="257313-BP1794"/>
<dbReference type="GeneID" id="69602029"/>
<dbReference type="KEGG" id="bpe:BP1794"/>
<dbReference type="PATRIC" id="fig|257313.5.peg.1926"/>
<dbReference type="eggNOG" id="COG1974">
    <property type="taxonomic scope" value="Bacteria"/>
</dbReference>
<dbReference type="HOGENOM" id="CLU_066192_45_3_4"/>
<dbReference type="Proteomes" id="UP000002676">
    <property type="component" value="Chromosome"/>
</dbReference>
<dbReference type="GO" id="GO:0003677">
    <property type="term" value="F:DNA binding"/>
    <property type="evidence" value="ECO:0007669"/>
    <property type="project" value="UniProtKB-UniRule"/>
</dbReference>
<dbReference type="GO" id="GO:0004252">
    <property type="term" value="F:serine-type endopeptidase activity"/>
    <property type="evidence" value="ECO:0007669"/>
    <property type="project" value="UniProtKB-UniRule"/>
</dbReference>
<dbReference type="GO" id="GO:0006281">
    <property type="term" value="P:DNA repair"/>
    <property type="evidence" value="ECO:0007669"/>
    <property type="project" value="UniProtKB-UniRule"/>
</dbReference>
<dbReference type="GO" id="GO:0006260">
    <property type="term" value="P:DNA replication"/>
    <property type="evidence" value="ECO:0007669"/>
    <property type="project" value="UniProtKB-UniRule"/>
</dbReference>
<dbReference type="GO" id="GO:0045892">
    <property type="term" value="P:negative regulation of DNA-templated transcription"/>
    <property type="evidence" value="ECO:0007669"/>
    <property type="project" value="UniProtKB-UniRule"/>
</dbReference>
<dbReference type="GO" id="GO:0006508">
    <property type="term" value="P:proteolysis"/>
    <property type="evidence" value="ECO:0007669"/>
    <property type="project" value="InterPro"/>
</dbReference>
<dbReference type="GO" id="GO:0009432">
    <property type="term" value="P:SOS response"/>
    <property type="evidence" value="ECO:0007669"/>
    <property type="project" value="UniProtKB-UniRule"/>
</dbReference>
<dbReference type="CDD" id="cd06529">
    <property type="entry name" value="S24_LexA-like"/>
    <property type="match status" value="1"/>
</dbReference>
<dbReference type="FunFam" id="1.10.10.10:FF:000009">
    <property type="entry name" value="LexA repressor"/>
    <property type="match status" value="1"/>
</dbReference>
<dbReference type="FunFam" id="2.10.109.10:FF:000001">
    <property type="entry name" value="LexA repressor"/>
    <property type="match status" value="1"/>
</dbReference>
<dbReference type="Gene3D" id="2.10.109.10">
    <property type="entry name" value="Umud Fragment, subunit A"/>
    <property type="match status" value="1"/>
</dbReference>
<dbReference type="Gene3D" id="1.10.10.10">
    <property type="entry name" value="Winged helix-like DNA-binding domain superfamily/Winged helix DNA-binding domain"/>
    <property type="match status" value="1"/>
</dbReference>
<dbReference type="HAMAP" id="MF_00015">
    <property type="entry name" value="LexA"/>
    <property type="match status" value="1"/>
</dbReference>
<dbReference type="InterPro" id="IPR006200">
    <property type="entry name" value="LexA"/>
</dbReference>
<dbReference type="InterPro" id="IPR039418">
    <property type="entry name" value="LexA-like"/>
</dbReference>
<dbReference type="InterPro" id="IPR036286">
    <property type="entry name" value="LexA/Signal_pep-like_sf"/>
</dbReference>
<dbReference type="InterPro" id="IPR006199">
    <property type="entry name" value="LexA_DNA-bd_dom"/>
</dbReference>
<dbReference type="InterPro" id="IPR050077">
    <property type="entry name" value="LexA_repressor"/>
</dbReference>
<dbReference type="InterPro" id="IPR006197">
    <property type="entry name" value="Peptidase_S24_LexA"/>
</dbReference>
<dbReference type="InterPro" id="IPR015927">
    <property type="entry name" value="Peptidase_S24_S26A/B/C"/>
</dbReference>
<dbReference type="InterPro" id="IPR036388">
    <property type="entry name" value="WH-like_DNA-bd_sf"/>
</dbReference>
<dbReference type="InterPro" id="IPR036390">
    <property type="entry name" value="WH_DNA-bd_sf"/>
</dbReference>
<dbReference type="NCBIfam" id="TIGR00498">
    <property type="entry name" value="lexA"/>
    <property type="match status" value="1"/>
</dbReference>
<dbReference type="PANTHER" id="PTHR33516">
    <property type="entry name" value="LEXA REPRESSOR"/>
    <property type="match status" value="1"/>
</dbReference>
<dbReference type="PANTHER" id="PTHR33516:SF2">
    <property type="entry name" value="LEXA REPRESSOR-RELATED"/>
    <property type="match status" value="1"/>
</dbReference>
<dbReference type="Pfam" id="PF01726">
    <property type="entry name" value="LexA_DNA_bind"/>
    <property type="match status" value="1"/>
</dbReference>
<dbReference type="Pfam" id="PF00717">
    <property type="entry name" value="Peptidase_S24"/>
    <property type="match status" value="1"/>
</dbReference>
<dbReference type="PRINTS" id="PR00726">
    <property type="entry name" value="LEXASERPTASE"/>
</dbReference>
<dbReference type="SUPFAM" id="SSF51306">
    <property type="entry name" value="LexA/Signal peptidase"/>
    <property type="match status" value="1"/>
</dbReference>
<dbReference type="SUPFAM" id="SSF46785">
    <property type="entry name" value="Winged helix' DNA-binding domain"/>
    <property type="match status" value="1"/>
</dbReference>
<keyword id="KW-0068">Autocatalytic cleavage</keyword>
<keyword id="KW-0227">DNA damage</keyword>
<keyword id="KW-0234">DNA repair</keyword>
<keyword id="KW-0235">DNA replication</keyword>
<keyword id="KW-0238">DNA-binding</keyword>
<keyword id="KW-0378">Hydrolase</keyword>
<keyword id="KW-1185">Reference proteome</keyword>
<keyword id="KW-0678">Repressor</keyword>
<keyword id="KW-0742">SOS response</keyword>
<keyword id="KW-0804">Transcription</keyword>
<keyword id="KW-0805">Transcription regulation</keyword>
<proteinExistence type="inferred from homology"/>